<evidence type="ECO:0000255" key="1">
    <source>
        <dbReference type="HAMAP-Rule" id="MF_00406"/>
    </source>
</evidence>
<organism>
    <name type="scientific">Rhizobium johnstonii (strain DSM 114642 / LMG 32736 / 3841)</name>
    <name type="common">Rhizobium leguminosarum bv. viciae</name>
    <dbReference type="NCBI Taxonomy" id="216596"/>
    <lineage>
        <taxon>Bacteria</taxon>
        <taxon>Pseudomonadati</taxon>
        <taxon>Pseudomonadota</taxon>
        <taxon>Alphaproteobacteria</taxon>
        <taxon>Hyphomicrobiales</taxon>
        <taxon>Rhizobiaceae</taxon>
        <taxon>Rhizobium/Agrobacterium group</taxon>
        <taxon>Rhizobium</taxon>
        <taxon>Rhizobium johnstonii</taxon>
    </lineage>
</organism>
<gene>
    <name evidence="1" type="primary">fabZ</name>
    <name type="ordered locus">RL2230</name>
</gene>
<sequence length="155" mass="17168">MTEEATTTLSSADIIEIMKLLPHRYPFLMVDKIIEIDGDNTAIGIKNVTVNEPHFTGHFPESPIMPGVLLIEGMAQTAGAICAKKDGQPGNLVYFMTIENARFRKPVVPGDRVEFHVRKHKQRGNIWKFHCDAKVDGALVAEADIGAMIVRKDQA</sequence>
<feature type="chain" id="PRO_0000301918" description="3-hydroxyacyl-[acyl-carrier-protein] dehydratase FabZ">
    <location>
        <begin position="1"/>
        <end position="155"/>
    </location>
</feature>
<feature type="active site" evidence="1">
    <location>
        <position position="58"/>
    </location>
</feature>
<name>FABZ_RHIJ3</name>
<protein>
    <recommendedName>
        <fullName evidence="1">3-hydroxyacyl-[acyl-carrier-protein] dehydratase FabZ</fullName>
        <ecNumber evidence="1">4.2.1.59</ecNumber>
    </recommendedName>
    <alternativeName>
        <fullName evidence="1">(3R)-hydroxymyristoyl-[acyl-carrier-protein] dehydratase</fullName>
        <shortName evidence="1">(3R)-hydroxymyristoyl-ACP dehydrase</shortName>
    </alternativeName>
    <alternativeName>
        <fullName evidence="1">Beta-hydroxyacyl-ACP dehydratase</fullName>
    </alternativeName>
</protein>
<comment type="function">
    <text evidence="1">Involved in unsaturated fatty acids biosynthesis. Catalyzes the dehydration of short chain beta-hydroxyacyl-ACPs and long chain saturated and unsaturated beta-hydroxyacyl-ACPs.</text>
</comment>
<comment type="catalytic activity">
    <reaction evidence="1">
        <text>a (3R)-hydroxyacyl-[ACP] = a (2E)-enoyl-[ACP] + H2O</text>
        <dbReference type="Rhea" id="RHEA:13097"/>
        <dbReference type="Rhea" id="RHEA-COMP:9925"/>
        <dbReference type="Rhea" id="RHEA-COMP:9945"/>
        <dbReference type="ChEBI" id="CHEBI:15377"/>
        <dbReference type="ChEBI" id="CHEBI:78784"/>
        <dbReference type="ChEBI" id="CHEBI:78827"/>
        <dbReference type="EC" id="4.2.1.59"/>
    </reaction>
</comment>
<comment type="subcellular location">
    <subcellularLocation>
        <location evidence="1">Cytoplasm</location>
    </subcellularLocation>
</comment>
<comment type="similarity">
    <text evidence="1">Belongs to the thioester dehydratase family. FabZ subfamily.</text>
</comment>
<dbReference type="EC" id="4.2.1.59" evidence="1"/>
<dbReference type="EMBL" id="AM236080">
    <property type="protein sequence ID" value="CAK07722.1"/>
    <property type="molecule type" value="Genomic_DNA"/>
</dbReference>
<dbReference type="RefSeq" id="WP_003539296.1">
    <property type="nucleotide sequence ID" value="NC_008380.1"/>
</dbReference>
<dbReference type="SMR" id="Q1MH45"/>
<dbReference type="EnsemblBacteria" id="CAK07722">
    <property type="protein sequence ID" value="CAK07722"/>
    <property type="gene ID" value="RL2230"/>
</dbReference>
<dbReference type="GeneID" id="67485693"/>
<dbReference type="KEGG" id="rle:RL2230"/>
<dbReference type="eggNOG" id="COG0764">
    <property type="taxonomic scope" value="Bacteria"/>
</dbReference>
<dbReference type="HOGENOM" id="CLU_078912_1_2_5"/>
<dbReference type="Proteomes" id="UP000006575">
    <property type="component" value="Chromosome"/>
</dbReference>
<dbReference type="GO" id="GO:0005737">
    <property type="term" value="C:cytoplasm"/>
    <property type="evidence" value="ECO:0007669"/>
    <property type="project" value="UniProtKB-SubCell"/>
</dbReference>
<dbReference type="GO" id="GO:0016020">
    <property type="term" value="C:membrane"/>
    <property type="evidence" value="ECO:0007669"/>
    <property type="project" value="GOC"/>
</dbReference>
<dbReference type="GO" id="GO:0019171">
    <property type="term" value="F:(3R)-hydroxyacyl-[acyl-carrier-protein] dehydratase activity"/>
    <property type="evidence" value="ECO:0007669"/>
    <property type="project" value="UniProtKB-EC"/>
</dbReference>
<dbReference type="GO" id="GO:0006633">
    <property type="term" value="P:fatty acid biosynthetic process"/>
    <property type="evidence" value="ECO:0007669"/>
    <property type="project" value="UniProtKB-UniRule"/>
</dbReference>
<dbReference type="GO" id="GO:0009245">
    <property type="term" value="P:lipid A biosynthetic process"/>
    <property type="evidence" value="ECO:0007669"/>
    <property type="project" value="UniProtKB-UniRule"/>
</dbReference>
<dbReference type="CDD" id="cd01288">
    <property type="entry name" value="FabZ"/>
    <property type="match status" value="1"/>
</dbReference>
<dbReference type="FunFam" id="3.10.129.10:FF:000001">
    <property type="entry name" value="3-hydroxyacyl-[acyl-carrier-protein] dehydratase FabZ"/>
    <property type="match status" value="1"/>
</dbReference>
<dbReference type="Gene3D" id="3.10.129.10">
    <property type="entry name" value="Hotdog Thioesterase"/>
    <property type="match status" value="1"/>
</dbReference>
<dbReference type="HAMAP" id="MF_00406">
    <property type="entry name" value="FabZ"/>
    <property type="match status" value="1"/>
</dbReference>
<dbReference type="InterPro" id="IPR013114">
    <property type="entry name" value="FabA_FabZ"/>
</dbReference>
<dbReference type="InterPro" id="IPR010084">
    <property type="entry name" value="FabZ"/>
</dbReference>
<dbReference type="InterPro" id="IPR029069">
    <property type="entry name" value="HotDog_dom_sf"/>
</dbReference>
<dbReference type="NCBIfam" id="TIGR01750">
    <property type="entry name" value="fabZ"/>
    <property type="match status" value="1"/>
</dbReference>
<dbReference type="NCBIfam" id="NF000582">
    <property type="entry name" value="PRK00006.1"/>
    <property type="match status" value="1"/>
</dbReference>
<dbReference type="PANTHER" id="PTHR30272">
    <property type="entry name" value="3-HYDROXYACYL-[ACYL-CARRIER-PROTEIN] DEHYDRATASE"/>
    <property type="match status" value="1"/>
</dbReference>
<dbReference type="PANTHER" id="PTHR30272:SF1">
    <property type="entry name" value="3-HYDROXYACYL-[ACYL-CARRIER-PROTEIN] DEHYDRATASE"/>
    <property type="match status" value="1"/>
</dbReference>
<dbReference type="Pfam" id="PF07977">
    <property type="entry name" value="FabA"/>
    <property type="match status" value="1"/>
</dbReference>
<dbReference type="SUPFAM" id="SSF54637">
    <property type="entry name" value="Thioesterase/thiol ester dehydrase-isomerase"/>
    <property type="match status" value="1"/>
</dbReference>
<accession>Q1MH45</accession>
<proteinExistence type="inferred from homology"/>
<reference key="1">
    <citation type="journal article" date="2006" name="Genome Biol.">
        <title>The genome of Rhizobium leguminosarum has recognizable core and accessory components.</title>
        <authorList>
            <person name="Young J.P.W."/>
            <person name="Crossman L.C."/>
            <person name="Johnston A.W.B."/>
            <person name="Thomson N.R."/>
            <person name="Ghazoui Z.F."/>
            <person name="Hull K.H."/>
            <person name="Wexler M."/>
            <person name="Curson A.R.J."/>
            <person name="Todd J.D."/>
            <person name="Poole P.S."/>
            <person name="Mauchline T.H."/>
            <person name="East A.K."/>
            <person name="Quail M.A."/>
            <person name="Churcher C."/>
            <person name="Arrowsmith C."/>
            <person name="Cherevach I."/>
            <person name="Chillingworth T."/>
            <person name="Clarke K."/>
            <person name="Cronin A."/>
            <person name="Davis P."/>
            <person name="Fraser A."/>
            <person name="Hance Z."/>
            <person name="Hauser H."/>
            <person name="Jagels K."/>
            <person name="Moule S."/>
            <person name="Mungall K."/>
            <person name="Norbertczak H."/>
            <person name="Rabbinowitsch E."/>
            <person name="Sanders M."/>
            <person name="Simmonds M."/>
            <person name="Whitehead S."/>
            <person name="Parkhill J."/>
        </authorList>
    </citation>
    <scope>NUCLEOTIDE SEQUENCE [LARGE SCALE GENOMIC DNA]</scope>
    <source>
        <strain>DSM 114642 / LMG 32736 / 3841</strain>
    </source>
</reference>
<keyword id="KW-0963">Cytoplasm</keyword>
<keyword id="KW-0441">Lipid A biosynthesis</keyword>
<keyword id="KW-0444">Lipid biosynthesis</keyword>
<keyword id="KW-0443">Lipid metabolism</keyword>
<keyword id="KW-0456">Lyase</keyword>